<gene>
    <name type="primary">yffP</name>
    <name type="ordered locus">b2447</name>
</gene>
<proteinExistence type="predicted"/>
<organism>
    <name type="scientific">Escherichia coli (strain K12)</name>
    <dbReference type="NCBI Taxonomy" id="83333"/>
    <lineage>
        <taxon>Bacteria</taxon>
        <taxon>Pseudomonadati</taxon>
        <taxon>Pseudomonadota</taxon>
        <taxon>Gammaproteobacteria</taxon>
        <taxon>Enterobacterales</taxon>
        <taxon>Enterobacteriaceae</taxon>
        <taxon>Escherichia</taxon>
    </lineage>
</organism>
<protein>
    <recommendedName>
        <fullName>Uncharacterized protein YffP</fullName>
    </recommendedName>
</protein>
<dbReference type="EMBL" id="U00096">
    <property type="protein sequence ID" value="AAC75500.1"/>
    <property type="molecule type" value="Genomic_DNA"/>
</dbReference>
<dbReference type="PIR" id="F65019">
    <property type="entry name" value="F65019"/>
</dbReference>
<dbReference type="RefSeq" id="NP_416942.1">
    <property type="nucleotide sequence ID" value="NC_000913.3"/>
</dbReference>
<dbReference type="RefSeq" id="WP_000052882.1">
    <property type="nucleotide sequence ID" value="NZ_JACEFS010000004.1"/>
</dbReference>
<dbReference type="FunCoup" id="P76547">
    <property type="interactions" value="58"/>
</dbReference>
<dbReference type="STRING" id="511145.b2447"/>
<dbReference type="PaxDb" id="511145-b2447"/>
<dbReference type="EnsemblBacteria" id="AAC75500">
    <property type="protein sequence ID" value="AAC75500"/>
    <property type="gene ID" value="b2447"/>
</dbReference>
<dbReference type="GeneID" id="946928"/>
<dbReference type="KEGG" id="eco:b2447"/>
<dbReference type="KEGG" id="ecoc:C3026_13585"/>
<dbReference type="PATRIC" id="fig|511145.12.peg.2540"/>
<dbReference type="EchoBASE" id="EB3929"/>
<dbReference type="InParanoid" id="P76547"/>
<dbReference type="BioCyc" id="EcoCyc:G7277-MONOMER"/>
<dbReference type="PRO" id="PR:P76547"/>
<dbReference type="Proteomes" id="UP000000625">
    <property type="component" value="Chromosome"/>
</dbReference>
<feature type="chain" id="PRO_0000169236" description="Uncharacterized protein YffP">
    <location>
        <begin position="1"/>
        <end position="197"/>
    </location>
</feature>
<feature type="region of interest" description="Disordered" evidence="1">
    <location>
        <begin position="168"/>
        <end position="197"/>
    </location>
</feature>
<feature type="compositionally biased region" description="Basic and acidic residues" evidence="1">
    <location>
        <begin position="168"/>
        <end position="185"/>
    </location>
</feature>
<reference key="1">
    <citation type="journal article" date="1997" name="Science">
        <title>The complete genome sequence of Escherichia coli K-12.</title>
        <authorList>
            <person name="Blattner F.R."/>
            <person name="Plunkett G. III"/>
            <person name="Bloch C.A."/>
            <person name="Perna N.T."/>
            <person name="Burland V."/>
            <person name="Riley M."/>
            <person name="Collado-Vides J."/>
            <person name="Glasner J.D."/>
            <person name="Rode C.K."/>
            <person name="Mayhew G.F."/>
            <person name="Gregor J."/>
            <person name="Davis N.W."/>
            <person name="Kirkpatrick H.A."/>
            <person name="Goeden M.A."/>
            <person name="Rose D.J."/>
            <person name="Mau B."/>
            <person name="Shao Y."/>
        </authorList>
    </citation>
    <scope>NUCLEOTIDE SEQUENCE [LARGE SCALE GENOMIC DNA]</scope>
    <source>
        <strain>K12 / MG1655 / ATCC 47076</strain>
    </source>
</reference>
<evidence type="ECO:0000256" key="1">
    <source>
        <dbReference type="SAM" id="MobiDB-lite"/>
    </source>
</evidence>
<keyword id="KW-1185">Reference proteome</keyword>
<name>YFFP_ECOLI</name>
<sequence>MSLIRTETRDTKRAADPLHDLRSKPFSEWGEDEIRRFNLIDALLEFVYTDTSSPFGIGMTFDYTECWEIGVRDDCLVMTRVKPVHPEYAKHWNMKGVMNDKTRFHADKWVGYSKVLAWVSLSHKDTFTGAKRFQYFQTMYDMERQINANLPVGGLPNVDTERTGKLFQRDDFSEDSHANDPKLVGDDYVPQAPEQIN</sequence>
<accession>P76547</accession>